<sequence>MFASTVFVSLLAVAAAVPTNPQGQSCGNGNTVHCCNAETANKLTKGGILGALDLSNLLGQCNDVTAAVAGGAVPIKNTCSSQAVCCGEIHQNGLVNLGCTPIFV</sequence>
<dbReference type="EMBL" id="CP023324">
    <property type="protein sequence ID" value="ATY62804.1"/>
    <property type="molecule type" value="Genomic_DNA"/>
</dbReference>
<dbReference type="SMR" id="A0A2H4SI69"/>
<dbReference type="VEuPathDB" id="FungiDB:A9K55_007066"/>
<dbReference type="VEuPathDB" id="FungiDB:CCM_07964"/>
<dbReference type="OMA" id="AEVYCCN"/>
<dbReference type="OrthoDB" id="8759at474943"/>
<dbReference type="Proteomes" id="UP000323067">
    <property type="component" value="Chromosome vii"/>
</dbReference>
<dbReference type="GO" id="GO:0005576">
    <property type="term" value="C:extracellular region"/>
    <property type="evidence" value="ECO:0007669"/>
    <property type="project" value="UniProtKB-KW"/>
</dbReference>
<dbReference type="GO" id="GO:0009277">
    <property type="term" value="C:fungal-type cell wall"/>
    <property type="evidence" value="ECO:0007669"/>
    <property type="project" value="InterPro"/>
</dbReference>
<dbReference type="GO" id="GO:0005199">
    <property type="term" value="F:structural constituent of cell wall"/>
    <property type="evidence" value="ECO:0007669"/>
    <property type="project" value="InterPro"/>
</dbReference>
<dbReference type="CDD" id="cd23507">
    <property type="entry name" value="hydrophobin_I"/>
    <property type="match status" value="1"/>
</dbReference>
<dbReference type="InterPro" id="IPR001338">
    <property type="entry name" value="Hydrophobin"/>
</dbReference>
<dbReference type="Pfam" id="PF01185">
    <property type="entry name" value="Hydrophobin"/>
    <property type="match status" value="1"/>
</dbReference>
<dbReference type="SMART" id="SM00075">
    <property type="entry name" value="HYDRO"/>
    <property type="match status" value="1"/>
</dbReference>
<gene>
    <name evidence="5" type="primary">HYD4</name>
    <name type="ORF">A9K55_007066</name>
</gene>
<reference key="1">
    <citation type="journal article" date="2017" name="BMC Genomics">
        <title>Chromosome level assembly and secondary metabolite potential of the parasitic fungus Cordyceps militaris.</title>
        <authorList>
            <person name="Kramer G.J."/>
            <person name="Nodwell J.R."/>
        </authorList>
    </citation>
    <scope>NUCLEOTIDE SEQUENCE [LARGE SCALE GENOMIC DNA]</scope>
    <source>
        <strain>ATCC 34164</strain>
    </source>
</reference>
<reference key="2">
    <citation type="journal article" date="2021" name="Int. J. Mol. Sci.">
        <title>Cysteine-Rich Hydrophobin Gene Family: Genome Wide Analysis, Phylogeny and Transcript Profiling in Cordyceps militaris.</title>
        <authorList>
            <person name="Li X."/>
            <person name="Wang F."/>
            <person name="Xu Y."/>
            <person name="Liu G."/>
            <person name="Dong C."/>
        </authorList>
    </citation>
    <scope>FUNCTION</scope>
    <scope>INDUCTION</scope>
</reference>
<reference key="3">
    <citation type="journal article" date="2023" name="Int. J. Mol. Sci.">
        <title>Hydrophobin Gene Cmhyd4 Negatively Regulates Fruiting Body Development in Edible Fungi Cordyceps militaris.</title>
        <authorList>
            <person name="Li X."/>
            <person name="Liu M."/>
            <person name="Dong C."/>
        </authorList>
    </citation>
    <scope>FUNCTION</scope>
    <scope>DISRUPTION PHENOTYPE</scope>
</reference>
<evidence type="ECO:0000250" key="1">
    <source>
        <dbReference type="UniProtKB" id="P16933"/>
    </source>
</evidence>
<evidence type="ECO:0000255" key="2"/>
<evidence type="ECO:0000269" key="3">
    <source>
    </source>
</evidence>
<evidence type="ECO:0000269" key="4">
    <source>
    </source>
</evidence>
<evidence type="ECO:0000303" key="5">
    <source>
    </source>
</evidence>
<evidence type="ECO:0000305" key="6"/>
<comment type="function">
    <text evidence="3 4 6">Aerial growth, conidiation, and dispersal of filamentous fungi in the environment rely upon a capability of their secreting small amphipathic proteins called hydrophobins (HPBs) with low sequence identity. Class I can self-assemble into an outermost layer of rodlet bundles on aerial cell surfaces, conferring cellular hydrophobicity that supports fungal growth, development and dispersal; whereas Class II form highly ordered films at water-air interfaces through intermolecular interactions but contribute nothing to the rodlet structure (Probable). HYD4 is a class I hydrophobin that negatively regulates aerial mycelial growth, conidiation, carotenoid and adenosine synthesis, resistance to oxidant stress, and fruiting body development (PubMed:33440688, PubMed:36902017). Seems not to be involved in the mycelial growth rate, the hydrophobicity of the mycelia and conidia, nor the conidial virulence on silkworm pupae (PubMed:36902017).</text>
</comment>
<comment type="subunit">
    <text evidence="1">Self-assembles to form functional amyloid fibrils called rodlets. Self-assembly into fibrillar rodlets occurs spontaneously at hydrophobic:hydrophilic interfaces and the rodlets further associate laterally to form amphipathic monolayers.</text>
</comment>
<comment type="subcellular location">
    <subcellularLocation>
        <location evidence="1">Secreted</location>
    </subcellularLocation>
    <subcellularLocation>
        <location evidence="1">Secreted</location>
        <location evidence="1">Cell wall</location>
    </subcellularLocation>
</comment>
<comment type="induction">
    <text evidence="3">Shows a very low expression except at the early stages of fruiting body development (PubMed:33440688). Expression responds positively to light irradiation (PubMed:33440688).</text>
</comment>
<comment type="disruption phenotype">
    <text evidence="4">Does not affect the mycelial growth rate, the hydrophobicity of the mycelia and conidia, or the conidial virulence on silkworm pupae (PubMed:36902017). Leads to thicker aerial mycelia in darkness and quicker growth rates under abiotic stress (PubMed:36902017). Promotes conidia production and increases the contents of carotenoid and adenosine (PubMed:36902017). Increases the biological efficiency of the fruiting body by improving the fruiting body density (PubMed:36902017).</text>
</comment>
<comment type="similarity">
    <text evidence="6">Belongs to the fungal hydrophobin family.</text>
</comment>
<protein>
    <recommendedName>
        <fullName evidence="5">Class I hydrophobin 4</fullName>
    </recommendedName>
</protein>
<name>HYD4_CORMI</name>
<keyword id="KW-0134">Cell wall</keyword>
<keyword id="KW-0183">Conidiation</keyword>
<keyword id="KW-1015">Disulfide bond</keyword>
<keyword id="KW-0964">Secreted</keyword>
<keyword id="KW-0732">Signal</keyword>
<keyword id="KW-0749">Sporulation</keyword>
<proteinExistence type="evidence at transcript level"/>
<feature type="signal peptide" evidence="2">
    <location>
        <begin position="1"/>
        <end position="16"/>
    </location>
</feature>
<feature type="chain" id="PRO_5013984694" description="Class I hydrophobin 4">
    <location>
        <begin position="17"/>
        <end position="104"/>
    </location>
</feature>
<feature type="disulfide bond" evidence="1">
    <location>
        <begin position="26"/>
        <end position="85"/>
    </location>
</feature>
<feature type="disulfide bond" evidence="1">
    <location>
        <begin position="34"/>
        <end position="79"/>
    </location>
</feature>
<feature type="disulfide bond" evidence="1">
    <location>
        <begin position="35"/>
        <end position="61"/>
    </location>
</feature>
<feature type="disulfide bond" evidence="1">
    <location>
        <begin position="86"/>
        <end position="99"/>
    </location>
</feature>
<organism>
    <name type="scientific">Cordyceps militaris</name>
    <name type="common">Caterpillar fungus</name>
    <name type="synonym">Clavaria militaris</name>
    <dbReference type="NCBI Taxonomy" id="73501"/>
    <lineage>
        <taxon>Eukaryota</taxon>
        <taxon>Fungi</taxon>
        <taxon>Dikarya</taxon>
        <taxon>Ascomycota</taxon>
        <taxon>Pezizomycotina</taxon>
        <taxon>Sordariomycetes</taxon>
        <taxon>Hypocreomycetidae</taxon>
        <taxon>Hypocreales</taxon>
        <taxon>Cordycipitaceae</taxon>
        <taxon>Cordyceps</taxon>
    </lineage>
</organism>
<accession>A0A2H4SI69</accession>